<proteinExistence type="predicted"/>
<name>Y244_RICPR</name>
<sequence length="68" mass="7611">MKTNNILKVAVGASSVAQKALNSIANKGYNFIEDKILKGNYISREEFEKLQTLVIKLKKELTELKGNN</sequence>
<reference key="1">
    <citation type="journal article" date="1998" name="Nature">
        <title>The genome sequence of Rickettsia prowazekii and the origin of mitochondria.</title>
        <authorList>
            <person name="Andersson S.G.E."/>
            <person name="Zomorodipour A."/>
            <person name="Andersson J.O."/>
            <person name="Sicheritz-Ponten T."/>
            <person name="Alsmark U.C.M."/>
            <person name="Podowski R.M."/>
            <person name="Naeslund A.K."/>
            <person name="Eriksson A.-S."/>
            <person name="Winkler H.H."/>
            <person name="Kurland C.G."/>
        </authorList>
    </citation>
    <scope>NUCLEOTIDE SEQUENCE [LARGE SCALE GENOMIC DNA]</scope>
    <source>
        <strain>Madrid E</strain>
    </source>
</reference>
<keyword id="KW-1185">Reference proteome</keyword>
<accession>Q9ZDT1</accession>
<organism>
    <name type="scientific">Rickettsia prowazekii (strain Madrid E)</name>
    <dbReference type="NCBI Taxonomy" id="272947"/>
    <lineage>
        <taxon>Bacteria</taxon>
        <taxon>Pseudomonadati</taxon>
        <taxon>Pseudomonadota</taxon>
        <taxon>Alphaproteobacteria</taxon>
        <taxon>Rickettsiales</taxon>
        <taxon>Rickettsiaceae</taxon>
        <taxon>Rickettsieae</taxon>
        <taxon>Rickettsia</taxon>
        <taxon>typhus group</taxon>
    </lineage>
</organism>
<feature type="chain" id="PRO_0000101341" description="Uncharacterized protein RP244">
    <location>
        <begin position="1"/>
        <end position="68"/>
    </location>
</feature>
<dbReference type="EMBL" id="AJ235271">
    <property type="protein sequence ID" value="CAA14706.1"/>
    <property type="molecule type" value="Genomic_DNA"/>
</dbReference>
<dbReference type="PIR" id="H71678">
    <property type="entry name" value="H71678"/>
</dbReference>
<dbReference type="RefSeq" id="NP_220629.1">
    <property type="nucleotide sequence ID" value="NC_000963.1"/>
</dbReference>
<dbReference type="RefSeq" id="WP_004596058.1">
    <property type="nucleotide sequence ID" value="NC_000963.1"/>
</dbReference>
<dbReference type="SMR" id="Q9ZDT1"/>
<dbReference type="STRING" id="272947.gene:17555325"/>
<dbReference type="EnsemblBacteria" id="CAA14706">
    <property type="protein sequence ID" value="CAA14706"/>
    <property type="gene ID" value="CAA14706"/>
</dbReference>
<dbReference type="KEGG" id="rpr:RP244"/>
<dbReference type="PATRIC" id="fig|272947.5.peg.251"/>
<dbReference type="HOGENOM" id="CLU_2809672_0_0_5"/>
<dbReference type="OrthoDB" id="7161074at2"/>
<dbReference type="Proteomes" id="UP000002480">
    <property type="component" value="Chromosome"/>
</dbReference>
<protein>
    <recommendedName>
        <fullName>Uncharacterized protein RP244</fullName>
    </recommendedName>
</protein>
<gene>
    <name type="ordered locus">RP244</name>
</gene>